<feature type="chain" id="PRO_1000089184" description="Endoribonuclease YbeY">
    <location>
        <begin position="1"/>
        <end position="140"/>
    </location>
</feature>
<feature type="binding site" evidence="1">
    <location>
        <position position="100"/>
    </location>
    <ligand>
        <name>Zn(2+)</name>
        <dbReference type="ChEBI" id="CHEBI:29105"/>
        <note>catalytic</note>
    </ligand>
</feature>
<feature type="binding site" evidence="1">
    <location>
        <position position="104"/>
    </location>
    <ligand>
        <name>Zn(2+)</name>
        <dbReference type="ChEBI" id="CHEBI:29105"/>
        <note>catalytic</note>
    </ligand>
</feature>
<feature type="binding site" evidence="1">
    <location>
        <position position="110"/>
    </location>
    <ligand>
        <name>Zn(2+)</name>
        <dbReference type="ChEBI" id="CHEBI:29105"/>
        <note>catalytic</note>
    </ligand>
</feature>
<sequence length="140" mass="15759">MLEIDNQTPLESDFLSLEKIANVLAPTQTIELVLVSDETMREINRDSRGCDYATDVLSFPLEAIPHTPLGSVVINMPLAQESALKLGHRLEDEIALLFIHGVLHLLGYDHEKDKGEQRQKESELIKTFNLPLSLIERAQD</sequence>
<keyword id="KW-0963">Cytoplasm</keyword>
<keyword id="KW-0255">Endonuclease</keyword>
<keyword id="KW-0378">Hydrolase</keyword>
<keyword id="KW-0479">Metal-binding</keyword>
<keyword id="KW-0540">Nuclease</keyword>
<keyword id="KW-0690">Ribosome biogenesis</keyword>
<keyword id="KW-0698">rRNA processing</keyword>
<keyword id="KW-0862">Zinc</keyword>
<name>YBEY_HELPS</name>
<dbReference type="EC" id="3.1.-.-" evidence="1"/>
<dbReference type="EMBL" id="CP001072">
    <property type="protein sequence ID" value="ACD48601.1"/>
    <property type="molecule type" value="Genomic_DNA"/>
</dbReference>
<dbReference type="RefSeq" id="WP_000889604.1">
    <property type="nucleotide sequence ID" value="NC_010698.2"/>
</dbReference>
<dbReference type="SMR" id="B2UUR9"/>
<dbReference type="KEGG" id="hps:HPSH_05985"/>
<dbReference type="HOGENOM" id="CLU_106710_3_0_7"/>
<dbReference type="GO" id="GO:0005737">
    <property type="term" value="C:cytoplasm"/>
    <property type="evidence" value="ECO:0007669"/>
    <property type="project" value="UniProtKB-SubCell"/>
</dbReference>
<dbReference type="GO" id="GO:0004222">
    <property type="term" value="F:metalloendopeptidase activity"/>
    <property type="evidence" value="ECO:0007669"/>
    <property type="project" value="InterPro"/>
</dbReference>
<dbReference type="GO" id="GO:0004521">
    <property type="term" value="F:RNA endonuclease activity"/>
    <property type="evidence" value="ECO:0007669"/>
    <property type="project" value="UniProtKB-UniRule"/>
</dbReference>
<dbReference type="GO" id="GO:0008270">
    <property type="term" value="F:zinc ion binding"/>
    <property type="evidence" value="ECO:0007669"/>
    <property type="project" value="UniProtKB-UniRule"/>
</dbReference>
<dbReference type="GO" id="GO:0006364">
    <property type="term" value="P:rRNA processing"/>
    <property type="evidence" value="ECO:0007669"/>
    <property type="project" value="UniProtKB-UniRule"/>
</dbReference>
<dbReference type="Gene3D" id="3.40.390.30">
    <property type="entry name" value="Metalloproteases ('zincins'), catalytic domain"/>
    <property type="match status" value="1"/>
</dbReference>
<dbReference type="HAMAP" id="MF_00009">
    <property type="entry name" value="Endoribonucl_YbeY"/>
    <property type="match status" value="1"/>
</dbReference>
<dbReference type="InterPro" id="IPR023091">
    <property type="entry name" value="MetalPrtase_cat_dom_sf_prd"/>
</dbReference>
<dbReference type="InterPro" id="IPR002036">
    <property type="entry name" value="YbeY"/>
</dbReference>
<dbReference type="InterPro" id="IPR020549">
    <property type="entry name" value="YbeY_CS"/>
</dbReference>
<dbReference type="NCBIfam" id="TIGR00043">
    <property type="entry name" value="rRNA maturation RNase YbeY"/>
    <property type="match status" value="1"/>
</dbReference>
<dbReference type="PANTHER" id="PTHR46986">
    <property type="entry name" value="ENDORIBONUCLEASE YBEY, CHLOROPLASTIC"/>
    <property type="match status" value="1"/>
</dbReference>
<dbReference type="PANTHER" id="PTHR46986:SF1">
    <property type="entry name" value="ENDORIBONUCLEASE YBEY, CHLOROPLASTIC"/>
    <property type="match status" value="1"/>
</dbReference>
<dbReference type="Pfam" id="PF02130">
    <property type="entry name" value="YbeY"/>
    <property type="match status" value="1"/>
</dbReference>
<dbReference type="SUPFAM" id="SSF55486">
    <property type="entry name" value="Metalloproteases ('zincins'), catalytic domain"/>
    <property type="match status" value="1"/>
</dbReference>
<dbReference type="PROSITE" id="PS01306">
    <property type="entry name" value="UPF0054"/>
    <property type="match status" value="1"/>
</dbReference>
<proteinExistence type="inferred from homology"/>
<protein>
    <recommendedName>
        <fullName evidence="1">Endoribonuclease YbeY</fullName>
        <ecNumber evidence="1">3.1.-.-</ecNumber>
    </recommendedName>
</protein>
<accession>B2UUR9</accession>
<evidence type="ECO:0000255" key="1">
    <source>
        <dbReference type="HAMAP-Rule" id="MF_00009"/>
    </source>
</evidence>
<gene>
    <name evidence="1" type="primary">ybeY</name>
    <name type="ordered locus">HPSH_05985</name>
</gene>
<organism>
    <name type="scientific">Helicobacter pylori (strain Shi470)</name>
    <dbReference type="NCBI Taxonomy" id="512562"/>
    <lineage>
        <taxon>Bacteria</taxon>
        <taxon>Pseudomonadati</taxon>
        <taxon>Campylobacterota</taxon>
        <taxon>Epsilonproteobacteria</taxon>
        <taxon>Campylobacterales</taxon>
        <taxon>Helicobacteraceae</taxon>
        <taxon>Helicobacter</taxon>
    </lineage>
</organism>
<reference key="1">
    <citation type="submission" date="2008-05" db="EMBL/GenBank/DDBJ databases">
        <title>Genome sequence of Helicobacter pylori from the remote Amazon: traces of Asian ancestry of the first Americans.</title>
        <authorList>
            <person name="Kersulyte D."/>
            <person name="Kalia A."/>
            <person name="Gilman R.H."/>
            <person name="Berg D.E."/>
        </authorList>
    </citation>
    <scope>NUCLEOTIDE SEQUENCE [LARGE SCALE GENOMIC DNA]</scope>
    <source>
        <strain>Shi470</strain>
    </source>
</reference>
<comment type="function">
    <text evidence="1">Single strand-specific metallo-endoribonuclease involved in late-stage 70S ribosome quality control and in maturation of the 3' terminus of the 16S rRNA.</text>
</comment>
<comment type="cofactor">
    <cofactor evidence="1">
        <name>Zn(2+)</name>
        <dbReference type="ChEBI" id="CHEBI:29105"/>
    </cofactor>
    <text evidence="1">Binds 1 zinc ion.</text>
</comment>
<comment type="subcellular location">
    <subcellularLocation>
        <location evidence="1">Cytoplasm</location>
    </subcellularLocation>
</comment>
<comment type="similarity">
    <text evidence="1">Belongs to the endoribonuclease YbeY family.</text>
</comment>